<proteinExistence type="inferred from homology"/>
<sequence length="463" mass="53086">MHEKLTTRFAPSPTGYLHIGGLRTALYNYLYARKNGGNFLLRIEDTDLKRNSKEATKAIIEAFKWCGLEHDGEVTYQSERFDLYKEYVKKLLDEGKAYYCYMSKEELEELRAKQEAAKERPRYDGRYREFTGTPPQGIEPVVRIKAPQSGEIVFKDGVKGEVRFKAEDIMDDFIIARSDGTPTYNFTVVIDDALMGVSDVIRGDDHLSNTPKQIVLYEALGFKIPQFFHVAMIHGEDGKKLSKRHGATDVMEYKEMGILPQALLNFLVRLGWSHGDDEVFSLEDLKKLFDPYHINKSASCYNAKKLEWLNTHYIKTLPFEEIKRQLKDLGFDLSVYEKAGFLLDLLRERAKTLHDIINGAKSIVNAPQNYDENAVQKFVNENNLELLQAFANTLKDPKTGKDFEDFTNDFLEKKEAKLKDLAQPIRIALTGSAVSPSIFEVLEFLGVDECKKRIENFLKVRGK</sequence>
<accession>A7H295</accession>
<dbReference type="EC" id="6.1.1.17" evidence="1"/>
<dbReference type="EMBL" id="CP000768">
    <property type="protein sequence ID" value="ABS43292.1"/>
    <property type="molecule type" value="Genomic_DNA"/>
</dbReference>
<dbReference type="SMR" id="A7H295"/>
<dbReference type="KEGG" id="cjd:JJD26997_0434"/>
<dbReference type="HOGENOM" id="CLU_015768_6_0_7"/>
<dbReference type="Proteomes" id="UP000002302">
    <property type="component" value="Chromosome"/>
</dbReference>
<dbReference type="GO" id="GO:0005829">
    <property type="term" value="C:cytosol"/>
    <property type="evidence" value="ECO:0007669"/>
    <property type="project" value="TreeGrafter"/>
</dbReference>
<dbReference type="GO" id="GO:0005524">
    <property type="term" value="F:ATP binding"/>
    <property type="evidence" value="ECO:0007669"/>
    <property type="project" value="UniProtKB-UniRule"/>
</dbReference>
<dbReference type="GO" id="GO:0004818">
    <property type="term" value="F:glutamate-tRNA ligase activity"/>
    <property type="evidence" value="ECO:0007669"/>
    <property type="project" value="UniProtKB-UniRule"/>
</dbReference>
<dbReference type="GO" id="GO:0000049">
    <property type="term" value="F:tRNA binding"/>
    <property type="evidence" value="ECO:0007669"/>
    <property type="project" value="InterPro"/>
</dbReference>
<dbReference type="GO" id="GO:0008270">
    <property type="term" value="F:zinc ion binding"/>
    <property type="evidence" value="ECO:0007669"/>
    <property type="project" value="InterPro"/>
</dbReference>
<dbReference type="GO" id="GO:0006424">
    <property type="term" value="P:glutamyl-tRNA aminoacylation"/>
    <property type="evidence" value="ECO:0007669"/>
    <property type="project" value="UniProtKB-UniRule"/>
</dbReference>
<dbReference type="CDD" id="cd00808">
    <property type="entry name" value="GluRS_core"/>
    <property type="match status" value="1"/>
</dbReference>
<dbReference type="FunFam" id="3.40.50.620:FF:000007">
    <property type="entry name" value="Glutamate--tRNA ligase"/>
    <property type="match status" value="1"/>
</dbReference>
<dbReference type="Gene3D" id="1.10.10.350">
    <property type="match status" value="1"/>
</dbReference>
<dbReference type="Gene3D" id="3.40.50.620">
    <property type="entry name" value="HUPs"/>
    <property type="match status" value="1"/>
</dbReference>
<dbReference type="HAMAP" id="MF_00022">
    <property type="entry name" value="Glu_tRNA_synth_type1"/>
    <property type="match status" value="1"/>
</dbReference>
<dbReference type="InterPro" id="IPR045462">
    <property type="entry name" value="aa-tRNA-synth_I_cd-bd"/>
</dbReference>
<dbReference type="InterPro" id="IPR020751">
    <property type="entry name" value="aa-tRNA-synth_I_codon-bd_sub2"/>
</dbReference>
<dbReference type="InterPro" id="IPR001412">
    <property type="entry name" value="aa-tRNA-synth_I_CS"/>
</dbReference>
<dbReference type="InterPro" id="IPR008925">
    <property type="entry name" value="aa_tRNA-synth_I_cd-bd_sf"/>
</dbReference>
<dbReference type="InterPro" id="IPR004527">
    <property type="entry name" value="Glu-tRNA-ligase_bac/mito"/>
</dbReference>
<dbReference type="InterPro" id="IPR000924">
    <property type="entry name" value="Glu/Gln-tRNA-synth"/>
</dbReference>
<dbReference type="InterPro" id="IPR020058">
    <property type="entry name" value="Glu/Gln-tRNA-synth_Ib_cat-dom"/>
</dbReference>
<dbReference type="InterPro" id="IPR049940">
    <property type="entry name" value="GluQ/Sye"/>
</dbReference>
<dbReference type="InterPro" id="IPR033910">
    <property type="entry name" value="GluRS_core"/>
</dbReference>
<dbReference type="InterPro" id="IPR014729">
    <property type="entry name" value="Rossmann-like_a/b/a_fold"/>
</dbReference>
<dbReference type="NCBIfam" id="TIGR00464">
    <property type="entry name" value="gltX_bact"/>
    <property type="match status" value="1"/>
</dbReference>
<dbReference type="PANTHER" id="PTHR43311">
    <property type="entry name" value="GLUTAMATE--TRNA LIGASE"/>
    <property type="match status" value="1"/>
</dbReference>
<dbReference type="PANTHER" id="PTHR43311:SF2">
    <property type="entry name" value="GLUTAMATE--TRNA LIGASE, MITOCHONDRIAL-RELATED"/>
    <property type="match status" value="1"/>
</dbReference>
<dbReference type="Pfam" id="PF19269">
    <property type="entry name" value="Anticodon_2"/>
    <property type="match status" value="1"/>
</dbReference>
<dbReference type="Pfam" id="PF00749">
    <property type="entry name" value="tRNA-synt_1c"/>
    <property type="match status" value="1"/>
</dbReference>
<dbReference type="PRINTS" id="PR00987">
    <property type="entry name" value="TRNASYNTHGLU"/>
</dbReference>
<dbReference type="SUPFAM" id="SSF48163">
    <property type="entry name" value="An anticodon-binding domain of class I aminoacyl-tRNA synthetases"/>
    <property type="match status" value="1"/>
</dbReference>
<dbReference type="SUPFAM" id="SSF52374">
    <property type="entry name" value="Nucleotidylyl transferase"/>
    <property type="match status" value="1"/>
</dbReference>
<dbReference type="PROSITE" id="PS00178">
    <property type="entry name" value="AA_TRNA_LIGASE_I"/>
    <property type="match status" value="1"/>
</dbReference>
<comment type="function">
    <text evidence="1">Catalyzes the attachment of glutamate to tRNA(Glu) in a two-step reaction: glutamate is first activated by ATP to form Glu-AMP and then transferred to the acceptor end of tRNA(Glu).</text>
</comment>
<comment type="catalytic activity">
    <reaction evidence="1">
        <text>tRNA(Glu) + L-glutamate + ATP = L-glutamyl-tRNA(Glu) + AMP + diphosphate</text>
        <dbReference type="Rhea" id="RHEA:23540"/>
        <dbReference type="Rhea" id="RHEA-COMP:9663"/>
        <dbReference type="Rhea" id="RHEA-COMP:9680"/>
        <dbReference type="ChEBI" id="CHEBI:29985"/>
        <dbReference type="ChEBI" id="CHEBI:30616"/>
        <dbReference type="ChEBI" id="CHEBI:33019"/>
        <dbReference type="ChEBI" id="CHEBI:78442"/>
        <dbReference type="ChEBI" id="CHEBI:78520"/>
        <dbReference type="ChEBI" id="CHEBI:456215"/>
        <dbReference type="EC" id="6.1.1.17"/>
    </reaction>
</comment>
<comment type="subunit">
    <text evidence="1">Monomer.</text>
</comment>
<comment type="subcellular location">
    <subcellularLocation>
        <location evidence="1">Cytoplasm</location>
    </subcellularLocation>
</comment>
<comment type="similarity">
    <text evidence="1">Belongs to the class-I aminoacyl-tRNA synthetase family. Glutamate--tRNA ligase type 1 subfamily.</text>
</comment>
<name>SYE1_CAMJD</name>
<keyword id="KW-0030">Aminoacyl-tRNA synthetase</keyword>
<keyword id="KW-0067">ATP-binding</keyword>
<keyword id="KW-0963">Cytoplasm</keyword>
<keyword id="KW-0436">Ligase</keyword>
<keyword id="KW-0547">Nucleotide-binding</keyword>
<keyword id="KW-0648">Protein biosynthesis</keyword>
<feature type="chain" id="PRO_0000367638" description="Glutamate--tRNA ligase 1">
    <location>
        <begin position="1"/>
        <end position="463"/>
    </location>
</feature>
<feature type="short sequence motif" description="'HIGH' region" evidence="1">
    <location>
        <begin position="11"/>
        <end position="21"/>
    </location>
</feature>
<feature type="short sequence motif" description="'KMSKS' region" evidence="1">
    <location>
        <begin position="240"/>
        <end position="244"/>
    </location>
</feature>
<feature type="binding site" evidence="1">
    <location>
        <position position="243"/>
    </location>
    <ligand>
        <name>ATP</name>
        <dbReference type="ChEBI" id="CHEBI:30616"/>
    </ligand>
</feature>
<evidence type="ECO:0000255" key="1">
    <source>
        <dbReference type="HAMAP-Rule" id="MF_00022"/>
    </source>
</evidence>
<protein>
    <recommendedName>
        <fullName evidence="1">Glutamate--tRNA ligase 1</fullName>
        <ecNumber evidence="1">6.1.1.17</ecNumber>
    </recommendedName>
    <alternativeName>
        <fullName evidence="1">Glutamyl-tRNA synthetase 1</fullName>
        <shortName evidence="1">GluRS 1</shortName>
    </alternativeName>
</protein>
<reference key="1">
    <citation type="submission" date="2007-07" db="EMBL/GenBank/DDBJ databases">
        <title>Complete genome sequence of Campylobacter jejuni subsp doylei 269.97 isolated from human blood.</title>
        <authorList>
            <person name="Fouts D.E."/>
            <person name="Mongodin E.F."/>
            <person name="Puiu D."/>
            <person name="Sebastian Y."/>
            <person name="Miller W.G."/>
            <person name="Mandrell R.E."/>
            <person name="Lastovica A.J."/>
            <person name="Nelson K.E."/>
        </authorList>
    </citation>
    <scope>NUCLEOTIDE SEQUENCE [LARGE SCALE GENOMIC DNA]</scope>
    <source>
        <strain>ATCC BAA-1458 / RM4099 / 269.97</strain>
    </source>
</reference>
<organism>
    <name type="scientific">Campylobacter jejuni subsp. doylei (strain ATCC BAA-1458 / RM4099 / 269.97)</name>
    <dbReference type="NCBI Taxonomy" id="360109"/>
    <lineage>
        <taxon>Bacteria</taxon>
        <taxon>Pseudomonadati</taxon>
        <taxon>Campylobacterota</taxon>
        <taxon>Epsilonproteobacteria</taxon>
        <taxon>Campylobacterales</taxon>
        <taxon>Campylobacteraceae</taxon>
        <taxon>Campylobacter</taxon>
    </lineage>
</organism>
<gene>
    <name evidence="1" type="primary">gltX1</name>
    <name type="ordered locus">JJD26997_0434</name>
</gene>